<organism>
    <name type="scientific">Eastern equine encephalitis virus (strain PE-3.0815)</name>
    <name type="common">EEEV</name>
    <name type="synonym">Eastern equine encephalomyelitis virus</name>
    <dbReference type="NCBI Taxonomy" id="374597"/>
    <lineage>
        <taxon>Viruses</taxon>
        <taxon>Riboviria</taxon>
        <taxon>Orthornavirae</taxon>
        <taxon>Kitrinoviricota</taxon>
        <taxon>Alsuviricetes</taxon>
        <taxon>Martellivirales</taxon>
        <taxon>Togaviridae</taxon>
        <taxon>Alphavirus</taxon>
        <taxon>Eastern equine encephalitis virus</taxon>
    </lineage>
</organism>
<accession>Q306W8</accession>
<evidence type="ECO:0000250" key="1">
    <source>
        <dbReference type="UniProtKB" id="O90368"/>
    </source>
</evidence>
<evidence type="ECO:0000250" key="2">
    <source>
        <dbReference type="UniProtKB" id="P03317"/>
    </source>
</evidence>
<evidence type="ECO:0000250" key="3">
    <source>
        <dbReference type="UniProtKB" id="P08411"/>
    </source>
</evidence>
<evidence type="ECO:0000250" key="4">
    <source>
        <dbReference type="UniProtKB" id="P27282"/>
    </source>
</evidence>
<evidence type="ECO:0000250" key="5">
    <source>
        <dbReference type="UniProtKB" id="P36328"/>
    </source>
</evidence>
<evidence type="ECO:0000250" key="6">
    <source>
        <dbReference type="UniProtKB" id="Q4QXJ8"/>
    </source>
</evidence>
<evidence type="ECO:0000250" key="7">
    <source>
        <dbReference type="UniProtKB" id="Q8JUX6"/>
    </source>
</evidence>
<evidence type="ECO:0000255" key="8">
    <source>
        <dbReference type="PROSITE-ProRule" id="PRU00490"/>
    </source>
</evidence>
<evidence type="ECO:0000255" key="9">
    <source>
        <dbReference type="PROSITE-ProRule" id="PRU00539"/>
    </source>
</evidence>
<evidence type="ECO:0000255" key="10">
    <source>
        <dbReference type="PROSITE-ProRule" id="PRU00853"/>
    </source>
</evidence>
<evidence type="ECO:0000255" key="11">
    <source>
        <dbReference type="PROSITE-ProRule" id="PRU00990"/>
    </source>
</evidence>
<evidence type="ECO:0000255" key="12">
    <source>
        <dbReference type="PROSITE-ProRule" id="PRU01079"/>
    </source>
</evidence>
<evidence type="ECO:0000256" key="13">
    <source>
        <dbReference type="SAM" id="MobiDB-lite"/>
    </source>
</evidence>
<evidence type="ECO:0000305" key="14"/>
<feature type="chain" id="PRO_0000308385" description="Polyprotein P1234">
    <location>
        <begin position="1"/>
        <end position="2474"/>
    </location>
</feature>
<feature type="chain" id="PRO_0000228753" description="Polyprotein P123'">
    <location>
        <begin position="1"/>
        <end position="1866"/>
    </location>
</feature>
<feature type="chain" id="PRO_0000228754" description="Polyprotein P123">
    <location>
        <begin position="1"/>
        <end position="1859"/>
    </location>
</feature>
<feature type="chain" id="PRO_0000228755" description="mRNA-capping enzyme nsP1">
    <location>
        <begin position="1"/>
        <end position="533"/>
    </location>
</feature>
<feature type="chain" id="PRO_0000228756" description="Protease nsP2">
    <location>
        <begin position="534"/>
        <end position="1327"/>
    </location>
</feature>
<feature type="chain" id="PRO_0000228757" description="Non-structural protein 3'">
    <location>
        <begin position="1328"/>
        <end position="1866"/>
    </location>
</feature>
<feature type="chain" id="PRO_0000228758" description="Non-structural protein 3">
    <location>
        <begin position="1328"/>
        <end position="1859"/>
    </location>
</feature>
<feature type="chain" id="PRO_0000228759" description="RNA-directed RNA polymerase nsP4">
    <location>
        <begin position="1867"/>
        <end position="2474"/>
    </location>
</feature>
<feature type="domain" description="Alphavirus-like MT" evidence="12">
    <location>
        <begin position="28"/>
        <end position="257"/>
    </location>
</feature>
<feature type="domain" description="(+)RNA virus helicase ATP-binding" evidence="11">
    <location>
        <begin position="674"/>
        <end position="839"/>
    </location>
</feature>
<feature type="domain" description="(+)RNA virus helicase C-terminal" evidence="11">
    <location>
        <begin position="840"/>
        <end position="988"/>
    </location>
</feature>
<feature type="domain" description="Peptidase C9" evidence="10">
    <location>
        <begin position="1001"/>
        <end position="1320"/>
    </location>
</feature>
<feature type="domain" description="Macro" evidence="8">
    <location>
        <begin position="1328"/>
        <end position="1486"/>
    </location>
</feature>
<feature type="domain" description="RdRp catalytic" evidence="9">
    <location>
        <begin position="2231"/>
        <end position="2346"/>
    </location>
</feature>
<feature type="region of interest" description="NsP1 membrane-binding" evidence="3">
    <location>
        <begin position="242"/>
        <end position="261"/>
    </location>
</feature>
<feature type="region of interest" description="Nucleolus localization signal" evidence="3">
    <location>
        <begin position="1002"/>
        <end position="1021"/>
    </location>
</feature>
<feature type="region of interest" description="Binding to host G3BP family members" evidence="6">
    <location>
        <begin position="1773"/>
        <end position="1785"/>
    </location>
</feature>
<feature type="region of interest" description="Disordered" evidence="13">
    <location>
        <begin position="1820"/>
        <end position="1841"/>
    </location>
</feature>
<feature type="region of interest" description="Binding to host FXR family members" evidence="6">
    <location>
        <begin position="1838"/>
        <end position="1854"/>
    </location>
</feature>
<feature type="short sequence motif" description="Nuclear export signal" evidence="4">
    <location>
        <begin position="1054"/>
        <end position="1063"/>
    </location>
</feature>
<feature type="short sequence motif" description="Nuclear localization signal" evidence="4">
    <location>
        <begin position="1177"/>
        <end position="1181"/>
    </location>
</feature>
<feature type="active site" description="For cysteine protease nsP2 activity" evidence="10">
    <location>
        <position position="1010"/>
    </location>
</feature>
<feature type="active site" description="For cysteine protease nsP2 activity" evidence="10">
    <location>
        <position position="1079"/>
    </location>
</feature>
<feature type="binding site" evidence="11">
    <location>
        <begin position="719"/>
        <end position="726"/>
    </location>
    <ligand>
        <name>a ribonucleoside 5'-triphosphate</name>
        <dbReference type="ChEBI" id="CHEBI:61557"/>
    </ligand>
</feature>
<feature type="binding site" evidence="5">
    <location>
        <position position="1337"/>
    </location>
    <ligand>
        <name>ADP-D-ribose</name>
        <dbReference type="ChEBI" id="CHEBI:57967"/>
    </ligand>
</feature>
<feature type="binding site" evidence="7">
    <location>
        <position position="1351"/>
    </location>
    <ligand>
        <name>ADP-D-ribose</name>
        <dbReference type="ChEBI" id="CHEBI:57967"/>
    </ligand>
</feature>
<feature type="binding site" evidence="7">
    <location>
        <position position="1359"/>
    </location>
    <ligand>
        <name>ADP-D-ribose</name>
        <dbReference type="ChEBI" id="CHEBI:57967"/>
    </ligand>
</feature>
<feature type="binding site" evidence="5">
    <location>
        <position position="1438"/>
    </location>
    <ligand>
        <name>ADP-D-ribose</name>
        <dbReference type="ChEBI" id="CHEBI:57967"/>
    </ligand>
</feature>
<feature type="binding site" evidence="5">
    <location>
        <position position="1439"/>
    </location>
    <ligand>
        <name>ADP-D-ribose</name>
        <dbReference type="ChEBI" id="CHEBI:57967"/>
    </ligand>
</feature>
<feature type="binding site" evidence="7">
    <location>
        <position position="1440"/>
    </location>
    <ligand>
        <name>ADP-D-ribose</name>
        <dbReference type="ChEBI" id="CHEBI:57967"/>
    </ligand>
</feature>
<feature type="binding site" evidence="2">
    <location>
        <position position="1589"/>
    </location>
    <ligand>
        <name>Zn(2+)</name>
        <dbReference type="ChEBI" id="CHEBI:29105"/>
    </ligand>
</feature>
<feature type="binding site" evidence="2">
    <location>
        <position position="1591"/>
    </location>
    <ligand>
        <name>Zn(2+)</name>
        <dbReference type="ChEBI" id="CHEBI:29105"/>
    </ligand>
</feature>
<feature type="binding site" evidence="2">
    <location>
        <position position="1614"/>
    </location>
    <ligand>
        <name>Zn(2+)</name>
        <dbReference type="ChEBI" id="CHEBI:29105"/>
    </ligand>
</feature>
<feature type="binding site" evidence="2">
    <location>
        <position position="1632"/>
    </location>
    <ligand>
        <name>Zn(2+)</name>
        <dbReference type="ChEBI" id="CHEBI:29105"/>
    </ligand>
</feature>
<feature type="site" description="Involved in the phosphoramide link with 7-methyl-GMP" evidence="4">
    <location>
        <position position="37"/>
    </location>
</feature>
<feature type="site" description="Cleavage; by protease nsP2" evidence="2">
    <location>
        <begin position="533"/>
        <end position="534"/>
    </location>
</feature>
<feature type="site" description="Cleavage; by protease nsP2" evidence="2">
    <location>
        <begin position="1327"/>
        <end position="1328"/>
    </location>
</feature>
<feature type="site" description="Cleavage; by protease nsP2" evidence="7">
    <location>
        <begin position="1866"/>
        <end position="1867"/>
    </location>
</feature>
<feature type="lipid moiety-binding region" description="S-palmitoyl cysteine; by host" evidence="7">
    <location>
        <position position="417"/>
    </location>
</feature>
<name>POLN_EEEV8</name>
<proteinExistence type="evidence at protein level"/>
<comment type="function">
    <molecule>Polyprotein P1234</molecule>
    <text evidence="7">Inactive precursor of the viral replicase, which is activated by cleavages carried out by the viral protease nsP2.</text>
</comment>
<comment type="function">
    <molecule>Polyprotein P123</molecule>
    <text evidence="2 14">The early replication complex formed by the polyprotein P123 and nsP4 synthesizes the minus-strand RNAs (antigenome) (By similarity). Polyprotein P123 is a short-lived polyprotein that accumulates during early stage of infection (Probable). As soon P123 is cleaved into mature proteins, the plus-strand RNAs synthesis begins (By similarity).</text>
</comment>
<comment type="function">
    <molecule>Polyprotein P123'</molecule>
    <text evidence="14">The early replication complex formed by the polyprotein P123' and nsP4 synthesizes minus-strand RNAs (antigenome) (Probable). Polyprotein P123' is a short-lived polyprotein that accumulates during early stage of infection (Probable). As soon P123' is cleaved into mature proteins, the plus-strand RNAs synthesis begins (Probable).</text>
</comment>
<comment type="function">
    <molecule>mRNA-capping enzyme nsP1</molecule>
    <text evidence="2 3 4 7 14">Cytoplasmic capping enzyme that catalyzes two virus-specific reactions: methyltransferase and nsP1 guanylyltransferase (By similarity). mRNA-capping is necessary since all viral RNAs are synthesized in the cytoplasm, and host capping enzymes are restricted to the nucleus (Probable). The enzymatic reaction involves a covalent link between 7-methyl-GMP and nsP1, whereas eukaryotic capping enzymes form a covalent complex only with GMP (Probable). NsP1 capping consists in the following reactions: GTP is first methylated into 7-methyl-GMP and then is covalently linked to nsP1 to form the m7GMp-nsP1 complex from which 7-methyl-GMP complex is transferred to the mRNA to create the cap structure (By similarity). NsP1 is also needed for the initiation of the minus-strand RNAs synthesis (By similarity). Probably serves as a membrane anchor for the replication complex composed of nsP1-nsP4 (By similarity). Nsp1 is needed for the initiation of the minus-strand RNAs synthesis (By similarity). Palmitoylated nsP1 is remodeling host cell cytoskeleton, and induces filopodium-like structure formation at the surface of the host cell (By similarity).</text>
</comment>
<comment type="function">
    <molecule>Protease nsP2</molecule>
    <text evidence="2 3 4 7">Multifunctional protein whose N-terminus is part of the RNA polymerase complex and displays NTPase, RNA triphosphatase and helicase activities (By similarity). NTPase and RNA triphosphatase are involved in viral RNA capping and helicase keeps a check on the dsRNA replication intermediates (By similarity). The C-terminus harbors a protease that specifically cleaves the polyproteins and releases the mature proteins (By similarity). Required for the shutoff of minus-strand RNAs synthesis (By similarity). Inhibits host translation to ensure maximal viral gene expression and evade host immune response (By similarity).</text>
</comment>
<comment type="function">
    <molecule>Non-structural protein 3</molecule>
    <text evidence="2 4 6">Seems to be essential for minus-strand RNAs and subgenomic 26S mRNAs synthesis (By similarity). Displays mono-ADP-ribosylhydrolase activity (By similarity). ADP-ribosylation is a post-translational modification that controls various processes of the host cell and the virus probably needs to revert it for optimal viral replication (By similarity). Binds proteins of FXR and G3BP families and sequesters them into the viral RNA replication complexes thereby inhibiting the formation of host stress granules on viral mRNAs (By similarity). The nsp3-FXR and nsp3-G3BP complexes bind viral RNAs and probably orchestrate the assembly of viral replication complexes, thanks to the ability of G3BP and FXR family members to self-assemble and bind DNA (By similarity).</text>
</comment>
<comment type="function">
    <molecule>Non-structural protein 3'</molecule>
    <text evidence="2 14">Seems to be essential for minus-strand RNAs and subgenomic 26S mRNAs synthesis (By similarity). Displays mono-ADP-ribosylhydrolase activity (Probable). ADP-ribosylation is a post-translational modification that controls various processes of the host cell and the virus probably needs to revert it for optimal viral replication (Probable). Binds proteins of FXR and G3BP families and sequesters them into the viral RNA replication complexes thereby inhibiting the formation of host stress granules on viral mRNAs (Probable). The nsp3'-FXR and nsp3-G3BP complexes bind viral RNAs and probably orchestrate the assembly of viral replication complexes, thanks to the ability of G3BP and FXR family members to self-assemble and bind DNA (Probable).</text>
</comment>
<comment type="function">
    <molecule>RNA-directed RNA polymerase nsP4</molecule>
    <text evidence="2">RNA dependent RNA polymerase (By similarity). Replicates genomic and antigenomic RNA by recognizing replications specific signals. The early replication complex formed by the polyprotein P123 and nsP4 synthesizes minus-strand RNAs (By similarity). The late replication complex composed of fully processed nsP1-nsP4 is responsible for the production of genomic and subgenomic plus-strand RNAs (By similarity).</text>
</comment>
<comment type="catalytic activity">
    <reaction evidence="4">
        <text>GTP + S-adenosyl-L-methionine = N(7)-methyl-GTP + S-adenosyl-L-homocysteine</text>
        <dbReference type="Rhea" id="RHEA:46948"/>
        <dbReference type="ChEBI" id="CHEBI:37565"/>
        <dbReference type="ChEBI" id="CHEBI:57856"/>
        <dbReference type="ChEBI" id="CHEBI:59789"/>
        <dbReference type="ChEBI" id="CHEBI:87133"/>
    </reaction>
</comment>
<comment type="catalytic activity">
    <reaction evidence="4">
        <text>N(7)-methyl-GTP + L-histidyl-[protein] = N(tele)-(N(7)-methylguanosine 5'-phospho)-L-histidyl-[protein] + diphosphate</text>
        <dbReference type="Rhea" id="RHEA:54792"/>
        <dbReference type="Rhea" id="RHEA-COMP:9745"/>
        <dbReference type="Rhea" id="RHEA-COMP:13995"/>
        <dbReference type="ChEBI" id="CHEBI:29979"/>
        <dbReference type="ChEBI" id="CHEBI:33019"/>
        <dbReference type="ChEBI" id="CHEBI:87133"/>
        <dbReference type="ChEBI" id="CHEBI:138334"/>
    </reaction>
    <physiologicalReaction direction="left-to-right" evidence="4">
        <dbReference type="Rhea" id="RHEA:54793"/>
    </physiologicalReaction>
</comment>
<comment type="catalytic activity">
    <reaction evidence="4">
        <text>N(tele)-(N(7)-methylguanosine 5'-phospho)-L-histidyl-[protein] + a 5'-end diphospho-(purine-ribonucleoside) in mRNA + H(+) = a 5'-end (N(7)-methyl 5'-triphosphoguanosine)-(purine-ribonucleoside) in mRNA + L-histidyl-[protein]</text>
        <dbReference type="Rhea" id="RHEA:54800"/>
        <dbReference type="Rhea" id="RHEA-COMP:9745"/>
        <dbReference type="Rhea" id="RHEA-COMP:12925"/>
        <dbReference type="Rhea" id="RHEA-COMP:13929"/>
        <dbReference type="Rhea" id="RHEA-COMP:13995"/>
        <dbReference type="ChEBI" id="CHEBI:15378"/>
        <dbReference type="ChEBI" id="CHEBI:29979"/>
        <dbReference type="ChEBI" id="CHEBI:133968"/>
        <dbReference type="ChEBI" id="CHEBI:138276"/>
        <dbReference type="ChEBI" id="CHEBI:138334"/>
    </reaction>
</comment>
<comment type="catalytic activity">
    <reaction evidence="3">
        <text>a 5'-end triphospho-ribonucleoside in mRNA + H2O = a 5'-end diphospho-ribonucleoside in mRNA + phosphate + H(+)</text>
        <dbReference type="Rhea" id="RHEA:67004"/>
        <dbReference type="Rhea" id="RHEA-COMP:17164"/>
        <dbReference type="Rhea" id="RHEA-COMP:17165"/>
        <dbReference type="ChEBI" id="CHEBI:15377"/>
        <dbReference type="ChEBI" id="CHEBI:15378"/>
        <dbReference type="ChEBI" id="CHEBI:43474"/>
        <dbReference type="ChEBI" id="CHEBI:167616"/>
        <dbReference type="ChEBI" id="CHEBI:167618"/>
        <dbReference type="EC" id="3.6.1.74"/>
    </reaction>
    <physiologicalReaction direction="left-to-right" evidence="3">
        <dbReference type="Rhea" id="RHEA:67005"/>
    </physiologicalReaction>
</comment>
<comment type="catalytic activity">
    <reaction evidence="7">
        <text>a ribonucleoside 5'-triphosphate + H2O = a ribonucleoside 5'-diphosphate + phosphate + H(+)</text>
        <dbReference type="Rhea" id="RHEA:23680"/>
        <dbReference type="ChEBI" id="CHEBI:15377"/>
        <dbReference type="ChEBI" id="CHEBI:15378"/>
        <dbReference type="ChEBI" id="CHEBI:43474"/>
        <dbReference type="ChEBI" id="CHEBI:57930"/>
        <dbReference type="ChEBI" id="CHEBI:61557"/>
        <dbReference type="EC" id="3.6.1.15"/>
    </reaction>
</comment>
<comment type="catalytic activity">
    <reaction evidence="7">
        <text>ATP + H2O = ADP + phosphate + H(+)</text>
        <dbReference type="Rhea" id="RHEA:13065"/>
        <dbReference type="ChEBI" id="CHEBI:15377"/>
        <dbReference type="ChEBI" id="CHEBI:15378"/>
        <dbReference type="ChEBI" id="CHEBI:30616"/>
        <dbReference type="ChEBI" id="CHEBI:43474"/>
        <dbReference type="ChEBI" id="CHEBI:456216"/>
        <dbReference type="EC" id="3.6.4.13"/>
    </reaction>
</comment>
<comment type="catalytic activity">
    <reaction evidence="9">
        <text>RNA(n) + a ribonucleoside 5'-triphosphate = RNA(n+1) + diphosphate</text>
        <dbReference type="Rhea" id="RHEA:21248"/>
        <dbReference type="Rhea" id="RHEA-COMP:14527"/>
        <dbReference type="Rhea" id="RHEA-COMP:17342"/>
        <dbReference type="ChEBI" id="CHEBI:33019"/>
        <dbReference type="ChEBI" id="CHEBI:61557"/>
        <dbReference type="ChEBI" id="CHEBI:140395"/>
        <dbReference type="EC" id="2.7.7.48"/>
    </reaction>
</comment>
<comment type="catalytic activity">
    <reaction evidence="4">
        <text>4-O-(ADP-D-ribosyl)-L-aspartyl-[protein] + H2O = L-aspartyl-[protein] + ADP-D-ribose + H(+)</text>
        <dbReference type="Rhea" id="RHEA:54428"/>
        <dbReference type="Rhea" id="RHEA-COMP:9867"/>
        <dbReference type="Rhea" id="RHEA-COMP:13832"/>
        <dbReference type="ChEBI" id="CHEBI:15377"/>
        <dbReference type="ChEBI" id="CHEBI:15378"/>
        <dbReference type="ChEBI" id="CHEBI:29961"/>
        <dbReference type="ChEBI" id="CHEBI:57967"/>
        <dbReference type="ChEBI" id="CHEBI:138102"/>
    </reaction>
    <physiologicalReaction direction="left-to-right" evidence="4">
        <dbReference type="Rhea" id="RHEA:54429"/>
    </physiologicalReaction>
</comment>
<comment type="catalytic activity">
    <reaction evidence="4">
        <text>5-O-(ADP-D-ribosyl)-L-glutamyl-[protein] + H2O = L-glutamyl-[protein] + ADP-D-ribose + H(+)</text>
        <dbReference type="Rhea" id="RHEA:58248"/>
        <dbReference type="Rhea" id="RHEA-COMP:10208"/>
        <dbReference type="Rhea" id="RHEA-COMP:15089"/>
        <dbReference type="ChEBI" id="CHEBI:15377"/>
        <dbReference type="ChEBI" id="CHEBI:15378"/>
        <dbReference type="ChEBI" id="CHEBI:29973"/>
        <dbReference type="ChEBI" id="CHEBI:57967"/>
        <dbReference type="ChEBI" id="CHEBI:142540"/>
    </reaction>
    <physiologicalReaction direction="left-to-right" evidence="4">
        <dbReference type="Rhea" id="RHEA:58249"/>
    </physiologicalReaction>
</comment>
<comment type="catalytic activity">
    <reaction evidence="2">
        <text>RNA(n) + ATP = RNA(n)-3'-adenine ribonucleotide + diphosphate</text>
        <dbReference type="Rhea" id="RHEA:11332"/>
        <dbReference type="Rhea" id="RHEA-COMP:14527"/>
        <dbReference type="Rhea" id="RHEA-COMP:17347"/>
        <dbReference type="ChEBI" id="CHEBI:30616"/>
        <dbReference type="ChEBI" id="CHEBI:33019"/>
        <dbReference type="ChEBI" id="CHEBI:140395"/>
        <dbReference type="ChEBI" id="CHEBI:173115"/>
        <dbReference type="EC" id="2.7.7.19"/>
    </reaction>
</comment>
<comment type="catalytic activity">
    <reaction evidence="5">
        <text>ADP-alpha-D-ribose 1''-phosphate + H2O = ADP-D-ribose + phosphate</text>
        <dbReference type="Rhea" id="RHEA:25029"/>
        <dbReference type="ChEBI" id="CHEBI:15377"/>
        <dbReference type="ChEBI" id="CHEBI:43474"/>
        <dbReference type="ChEBI" id="CHEBI:57967"/>
        <dbReference type="ChEBI" id="CHEBI:58753"/>
        <dbReference type="EC" id="3.1.3.84"/>
    </reaction>
    <physiologicalReaction direction="left-to-right" evidence="5">
        <dbReference type="Rhea" id="RHEA:25030"/>
    </physiologicalReaction>
</comment>
<comment type="cofactor">
    <cofactor evidence="2">
        <name>Mg(2+)</name>
        <dbReference type="ChEBI" id="CHEBI:18420"/>
    </cofactor>
    <cofactor evidence="2">
        <name>Mn(2+)</name>
        <dbReference type="ChEBI" id="CHEBI:29035"/>
    </cofactor>
    <text evidence="2">For nsP4 adenylyltransferase activity; Mn(2+) supports catalysis at 60% of the levels observed with Mg(2+).</text>
</comment>
<comment type="cofactor">
    <cofactor evidence="2">
        <name>Mg(2+)</name>
        <dbReference type="ChEBI" id="CHEBI:18420"/>
    </cofactor>
    <text evidence="2">For nsP4 RNA-directed RNA polymerase activity.</text>
</comment>
<comment type="cofactor">
    <cofactor evidence="4">
        <name>Mg(2+)</name>
        <dbReference type="ChEBI" id="CHEBI:18420"/>
    </cofactor>
    <text evidence="4">For nsP1 guanylylation.</text>
</comment>
<comment type="cofactor">
    <cofactor>
        <name>Mg(2+)</name>
        <dbReference type="ChEBI" id="CHEBI:18420"/>
    </cofactor>
    <text evidence="7">For nsP2 RNA triphosphatase activity.</text>
</comment>
<comment type="cofactor">
    <cofactor>
        <name>Mg(2+)</name>
        <dbReference type="ChEBI" id="CHEBI:18420"/>
    </cofactor>
    <text evidence="7">For nsP2 NTPase activity.</text>
</comment>
<comment type="activity regulation">
    <molecule>mRNA-capping enzyme nsP1</molecule>
    <text evidence="4">Inhibited by sinefungin.</text>
</comment>
<comment type="subunit">
    <molecule>mRNA-capping enzyme nsP1</molecule>
    <text evidence="4 6 7">Interacts with non-structural protein 3 (By similarity). Interacts with RNA-directed RNA polymerase nsP4 (By similarity). Interacts with protease nsP2 (By similarity). interacts with itself (By similarity).</text>
</comment>
<comment type="subunit">
    <molecule>Non-structural protein 3</molecule>
    <text evidence="4 6 7">Interacts with mRNA-capping enzyme nsP1 (By similarity). Interacts with host DDX1 (By similarity). Interacts with host DDX3 (By similarity). Interacts (via C-terminus) with host FXR1; this interaction inhibits the formation of host stress granules on viral mRNAs and the nsp3-FXR1 complexes bind viral RNAs and probably orchestrate the assembly of viral replication complexes (By similarity). Interacts (via C-terminus) with host FXR2; this interaction inhibits the formation of host stress granules on viral mRNAs and the nsp3-FXR2 complexes bind viral RNAs and probably orchestrate the assembly of viral replication complexes (By similarity). Interacts (via C-terminus) with host FMR1; this interaction inhibits the formation of host stress granules on viral mRNAs and the nsp3-FMR1 complexes bind viral RNAs and probably orchestrate the assembly of viral replication complexes (By similarity). Interacts (via C-terminus) with host G3BP1; this interaction inhibits the formation of host stress granules on viral mRNAs and the nsp3-G3BP1 complexes bind viral RNAs and probably orchestrate the assembly of viral replication complexes (By similarity). Interacts (via C-terminus) with host G3BP2; this interaction inhibits the formation of host stress granules on viral mRNAs and the nsp3-G3BP2 complexes bind viral RNAs and probably orchestrate the assembly of viral replication complexes (By similarity).</text>
</comment>
<comment type="subunit">
    <molecule>RNA-directed RNA polymerase nsP4</molecule>
    <text evidence="4 6 7">Interacts with mRNA-capping enzyme nsP1 (By similarity). Interacts with protease nsP2 (By similarity). interacts with itself (By similarity).</text>
</comment>
<comment type="subunit">
    <molecule>Protease nsP2</molecule>
    <text evidence="4 6 7">Interacts with RNA-directed RNA polymerase nsP4 (By similarity). Interacts with mRNA-capping enzyme nsP1 (By similarity). Interacts with KPNA1/karyopherin-alpha1; this interaction probably allows the active transport of protease nsP2 into the host nucleus (By similarity).</text>
</comment>
<comment type="interaction">
    <interactant intactId="EBI-38259300">
        <id>Q306W8</id>
    </interactant>
    <interactant intactId="EBI-354967">
        <id>Q00610</id>
        <label>CLTC</label>
    </interactant>
    <organismsDiffer>true</organismsDiffer>
    <experiments>2</experiments>
</comment>
<comment type="subcellular location">
    <molecule>Polyprotein P1234</molecule>
    <subcellularLocation>
        <location evidence="14">Host cytoplasmic vesicle membrane</location>
        <topology evidence="14">Peripheral membrane protein</topology>
    </subcellularLocation>
    <text evidence="14">Part of cytoplasmic vesicles, which are probably formed at the plasma membrane and internalized leading to late endosomal/lysosomal spherules containing the replication complex.</text>
</comment>
<comment type="subcellular location">
    <molecule>Polyprotein P123'</molecule>
    <subcellularLocation>
        <location evidence="14">Host cytoplasmic vesicle membrane</location>
        <topology evidence="14">Peripheral membrane protein</topology>
    </subcellularLocation>
    <text evidence="14">Part of cytoplasmic vesicles, which are probably formed at the plasma membrane and internalized leading to late endosomal/lysosomal spherules containing the replication complex.</text>
</comment>
<comment type="subcellular location">
    <molecule>Polyprotein P123</molecule>
    <subcellularLocation>
        <location evidence="14">Host cytoplasmic vesicle membrane</location>
        <topology evidence="14">Peripheral membrane protein</topology>
    </subcellularLocation>
    <text evidence="14">Part of cytoplasmic vesicles, which are probably formed at the plasma membrane and internalized leading to late endosomal/lysosomal spherules containing the replication complex.</text>
</comment>
<comment type="subcellular location">
    <molecule>mRNA-capping enzyme nsP1</molecule>
    <subcellularLocation>
        <location evidence="3">Host cytoplasmic vesicle membrane</location>
        <topology evidence="3">Lipid-anchor</topology>
    </subcellularLocation>
    <subcellularLocation>
        <location evidence="3">Host cell membrane</location>
        <topology evidence="3">Lipid-anchor</topology>
        <orientation evidence="3">Cytoplasmic side</orientation>
    </subcellularLocation>
    <subcellularLocation>
        <location evidence="3">Host cell projection</location>
        <location evidence="3">Host filopodium</location>
    </subcellularLocation>
    <text evidence="3">In the late phase of infection, the polyprotein is quickly cleaved before localization to cellular membranes. Then a fraction of nsP1 localizes to the inner surface of the plasma membrane and its filopodial extensions. Only the palmitoylated nsP1 localizes to the host filopodia (By similarity). NsP1 is also part of cytoplasmic vesicles, which are probably formed at the plasma membrane and internalized leading to late endosomal/lysosomal spherules containing the replication complex (By similarity).</text>
</comment>
<comment type="subcellular location">
    <molecule>Protease nsP2</molecule>
    <subcellularLocation>
        <location evidence="3">Host cytoplasmic vesicle membrane</location>
        <topology evidence="3">Peripheral membrane protein</topology>
    </subcellularLocation>
    <subcellularLocation>
        <location evidence="4">Host nucleus</location>
    </subcellularLocation>
    <subcellularLocation>
        <location evidence="4">Host cytoplasm</location>
    </subcellularLocation>
    <text evidence="3 4">In the late phase of infection, the polyprotein is quickly cleaved before localization to cellular membranes. Then approximately half of nsP2 is found in the nucleus (By similarity). Shuttles between cytoplasm and nucleus (By similarity). NsP2 is also part of cytoplasmic vesicles, which are probably formed at the plasma membrane and internalized leading to late endosomal/lysosomal spherules containing the replication complex (By similarity).</text>
</comment>
<comment type="subcellular location">
    <molecule>Non-structural protein 3</molecule>
    <subcellularLocation>
        <location evidence="2">Host cytoplasmic vesicle membrane</location>
        <topology evidence="14">Peripheral membrane protein</topology>
    </subcellularLocation>
    <text evidence="2">In the late phase of infection, the polyprotein is quickly cleaved before localization to cellular membranes. Then nsP3 and nsP3' form aggregates in cytoplasm (By similarity). NsP3 is also part of cytoplasmic vesicles, which are probably formed at the plasma membrane and internalized leading to late endosomal/lysosomal spherules containing the replication complex (By similarity).</text>
</comment>
<comment type="subcellular location">
    <molecule>Non-structural protein 3'</molecule>
    <subcellularLocation>
        <location evidence="14">Host cytoplasmic vesicle membrane</location>
        <topology evidence="14">Peripheral membrane protein</topology>
    </subcellularLocation>
    <text evidence="2 14">In the late phase of infection, the polyprotein is quickly cleaved before localization to cellular membranes. Then nsP3 and nsP3' form aggregates in cytoplasm (By similarity). NsP3' is also part of cytoplasmic vesicles, which are probably formed at the plasma membrane and internalized leading to late endosomal/lysosomal spherules containing the replication complex (Probable).</text>
</comment>
<comment type="subcellular location">
    <molecule>RNA-directed RNA polymerase nsP4</molecule>
    <subcellularLocation>
        <location>Host cytoplasmic vesicle membrane</location>
        <topology evidence="3">Peripheral membrane protein</topology>
    </subcellularLocation>
    <text evidence="3">NsP4 is part of cytoplasmic vesicles, which are probably formed at the plasma membrane and internalized leading to late endosomal/lysosomal spherules containing the replication complex.</text>
</comment>
<comment type="domain">
    <molecule>Protease nsP2</molecule>
    <text evidence="4 7">The N-terminus exhibits NTPase and RNA triphosphatase activities and is proposed to have helicase activity, whereas the C-terminus possesses protease activity (By similarity). Contains a nuclear localization signal and a nuclear export signal, these two motifs are probably involved in the shuttling between the cytoplasm and the nucleus of nsP2 (By similarity).</text>
</comment>
<comment type="domain">
    <molecule>Non-structural protein 3</molecule>
    <text evidence="2 4 6">In the N-terminus, the macro domain displays a mono-ADP-ribosylhydrolase activity (By similarity). The central part has a zinc-binding function (By similarity). The C-terminus contains two regions responsible for the formation of the nsP3/FXR and nsp3/G3BP complexes (By similarity).</text>
</comment>
<comment type="domain">
    <molecule>Non-structural protein 3'</molecule>
    <text evidence="2 4 6">In the N-terminus, the macro domain displays a mono-ADP-ribosylhydrolase activity (By similarity). The central part has a zinc-binding function (By similarity). The C-terminus contains two regions responsible for the formation of the nsP3'/FXR and nsp3'/G3BP complexes (By similarity).</text>
</comment>
<comment type="PTM">
    <molecule>Polyprotein P1234</molecule>
    <text evidence="2">Specific enzymatic cleavages in vivo yield mature proteins (By similarity). The processing of the polyprotein is temporally regulated (By similarity). In early stages (1.7 hpi), P1234 is first cleaved in trans through its nsP2 protease activity, releasing P123' and nsP4, which associate to form the early replication complex (By similarity). At the same time, P1234 is also cut at the nsP1/nsP2 site early in infection but with lower efficiency (By similarity). After replication of the viral minus-strand RNAs (4 hpi), the polyproteins are cut at the nsP1/nsP2 and nsP2/nsP3 sites very efficiently, preventing accumulation of P123' and P1234 and allowing the formation of the late replication complex (By similarity). NsP3'/nsP4 site is not cleaved anymore and P34 is produced rather than nsP4 (By similarity).</text>
</comment>
<comment type="PTM">
    <molecule>Polyprotein P123</molecule>
    <text evidence="2">Specific enzymatic cleavages in vivo yield mature proteins (By similarity). The processing of the polyprotein is temporally regulated (By similarity). In early stages (1.7 hpi), P123 is cleaved at the nsP1/nsP2 site with low efficiency (By similarity). After replication of the viral minus-strand RNAs (4 hpi), the polyproteins are cut at the nsP1/nsP2 and nsP2/nsP3 sites very efficiently, preventing accumulation of P123 and allowing the formation of the late replication complex (By similarity).</text>
</comment>
<comment type="PTM">
    <molecule>Polyprotein P123'</molecule>
    <text evidence="2">Specific enzymatic cleavages in vivo yield mature proteins (By similarity). The processing of the polyprotein is temporally regulated (By similarity). In early stages (1.7 hpi), P123' is cleaved at the nsP1/nsP2 site with low efficiency (By similarity). After replication of the viral minus-strand RNAs (4 hpi), the polyproteins are cut at the nsP1/nsP2 and nsP2/nsP3 sites very efficiently, preventing accumulation of P123' and allowing the formation of the late replication complex (By similarity).</text>
</comment>
<comment type="PTM">
    <molecule>mRNA-capping enzyme nsP1</molecule>
    <text evidence="2">Palmitoylated by host palmitoyltransferases ZDHHC2 and ZDHHC19.</text>
</comment>
<comment type="PTM">
    <molecule>Non-structural protein 3</molecule>
    <text evidence="3">Phosphorylated by host on serines and threonines.</text>
</comment>
<comment type="PTM">
    <molecule>Non-structural protein 3'</molecule>
    <text evidence="3">Phosphorylated by host on serines and threonines.</text>
</comment>
<comment type="PTM">
    <molecule>RNA-directed RNA polymerase nsP4</molecule>
    <text evidence="2">Ubiquitinated; targets the protein for rapid degradation via the ubiquitin system (By similarity). Nsp4 is present in extremely low quantities due to low frequency of translation through the amber stop-codon and the degradation by the ubiquitin pathway (By similarity).</text>
</comment>
<comment type="miscellaneous">
    <text evidence="2">Viral replication produces dsRNA in the late phase of infection, resulting in a strong activation of host EIF2AK2/PKR, leading to almost complete phosphorylation of EIF2A (By similarity). This inactivates completely cellular translation initiation, resulting shutoff of host proteins synthesis (By similarity). However, phosphorylation of EIF2A is probably not the only mechanism responsible for the host translation shutoff (By similarity). The viral translation can still occur normally because it relies on a hairpin structure in the coding region of sgRNA and is EIF2A-, EIF2D-, EIF4G- EIF4A-independent (By similarity).</text>
</comment>
<comment type="miscellaneous">
    <text evidence="1 2 14">The genome codes for P123, but readthrough of a terminator codon UGA occurs between the codons for Asn-1856 and Arg-1858 giving rise to P1234 (Probable). P1234 is cleaved quickly by nsP2 into P123' and nsP4 (By similarity). Further processing of p123' gives nsP1, nsP2 and nsP3' which is 6 amino acids longer than nsP3 since the cleavage site is after the readthrough (By similarity). This unusual molecular mechanism ensures that few nsP4 are produced compared to other non-structural proteins (By similarity). Mutant viruses with no alternative termination site grow significantly slower than wild-type virus (By similarity). The opal termination codon is frequently mutated to a sense codon on passage in cell culture (By similarity). The presence of the opal codon may be a requirement for viral maintenance in both vertebrate and invertebrate hosts and a selective advantage may be conferred in cell culture for the sense codon (By similarity).</text>
</comment>
<keyword id="KW-0067">ATP-binding</keyword>
<keyword id="KW-1262">Eukaryotic host gene expression shutoff by virus</keyword>
<keyword id="KW-1191">Eukaryotic host transcription shutoff by virus</keyword>
<keyword id="KW-0342">GTP-binding</keyword>
<keyword id="KW-0347">Helicase</keyword>
<keyword id="KW-1032">Host cell membrane</keyword>
<keyword id="KW-1034">Host cell projection</keyword>
<keyword id="KW-1035">Host cytoplasm</keyword>
<keyword id="KW-1036">Host cytoplasmic vesicle</keyword>
<keyword id="KW-1190">Host gene expression shutoff by virus</keyword>
<keyword id="KW-1043">Host membrane</keyword>
<keyword id="KW-1048">Host nucleus</keyword>
<keyword id="KW-0945">Host-virus interaction</keyword>
<keyword id="KW-0378">Hydrolase</keyword>
<keyword id="KW-1104">Inhibition of host RNA polymerase II by virus</keyword>
<keyword id="KW-0449">Lipoprotein</keyword>
<keyword id="KW-0472">Membrane</keyword>
<keyword id="KW-0479">Metal-binding</keyword>
<keyword id="KW-0489">Methyltransferase</keyword>
<keyword id="KW-0506">mRNA capping</keyword>
<keyword id="KW-0507">mRNA processing</keyword>
<keyword id="KW-0511">Multifunctional enzyme</keyword>
<keyword id="KW-0547">Nucleotide-binding</keyword>
<keyword id="KW-0548">Nucleotidyltransferase</keyword>
<keyword id="KW-0564">Palmitate</keyword>
<keyword id="KW-0597">Phosphoprotein</keyword>
<keyword id="KW-0645">Protease</keyword>
<keyword id="KW-1159">RNA suppression of termination</keyword>
<keyword id="KW-0694">RNA-binding</keyword>
<keyword id="KW-0696">RNA-directed RNA polymerase</keyword>
<keyword id="KW-0949">S-adenosyl-L-methionine</keyword>
<keyword id="KW-0788">Thiol protease</keyword>
<keyword id="KW-0808">Transferase</keyword>
<keyword id="KW-0832">Ubl conjugation</keyword>
<keyword id="KW-0693">Viral RNA replication</keyword>
<keyword id="KW-0862">Zinc</keyword>
<protein>
    <recommendedName>
        <fullName>Polyprotein P1234</fullName>
        <shortName>P1234</shortName>
    </recommendedName>
    <alternativeName>
        <fullName>Non-structural polyprotein</fullName>
    </alternativeName>
    <component>
        <recommendedName>
            <fullName>Polyprotein P123'</fullName>
            <shortName>P123'</shortName>
        </recommendedName>
    </component>
    <component>
        <recommendedName>
            <fullName>Polyprotein P123</fullName>
            <shortName>P123</shortName>
        </recommendedName>
    </component>
    <component>
        <recommendedName>
            <fullName>mRNA-capping enzyme nsP1</fullName>
            <ecNumber evidence="5">2.1.1.-</ecNumber>
            <ecNumber evidence="5">2.7.7.-</ecNumber>
        </recommendedName>
        <alternativeName>
            <fullName>Non-structural protein 1</fullName>
        </alternativeName>
    </component>
    <component>
        <recommendedName>
            <fullName>Protease nsP2</fullName>
            <ecNumber evidence="4">3.4.22.-</ecNumber>
            <ecNumber evidence="7">3.6.1.15</ecNumber>
            <ecNumber evidence="3">3.6.1.74</ecNumber>
            <ecNumber evidence="7">3.6.4.13</ecNumber>
        </recommendedName>
        <alternativeName>
            <fullName>Non-structural protein 2</fullName>
            <shortName>nsP2</shortName>
        </alternativeName>
    </component>
    <component>
        <recommendedName>
            <fullName>Non-structural protein 3'</fullName>
            <shortName>nsP3'</shortName>
            <ecNumber evidence="4">3.1.3.84</ecNumber>
        </recommendedName>
    </component>
    <component>
        <recommendedName>
            <fullName>Non-structural protein 3</fullName>
            <shortName>nsP3</shortName>
            <ecNumber evidence="4">3.1.3.84</ecNumber>
        </recommendedName>
    </component>
    <component>
        <recommendedName>
            <fullName>RNA-directed RNA polymerase nsP4</fullName>
            <ecNumber evidence="2">2.7.7.19</ecNumber>
            <ecNumber evidence="9">2.7.7.48</ecNumber>
        </recommendedName>
        <alternativeName>
            <fullName>Non-structural protein 4</fullName>
            <shortName>nsP4</shortName>
        </alternativeName>
    </component>
</protein>
<reference key="1">
    <citation type="submission" date="2005-10" db="EMBL/GenBank/DDBJ databases">
        <title>Eastern equine encephalomyelitis virus strain.</title>
        <authorList>
            <person name="Kondig J.P."/>
            <person name="Turell M.J."/>
            <person name="Lee J.S."/>
            <person name="O'Guinn M.L."/>
            <person name="Wasieloski L.P. Jr."/>
        </authorList>
    </citation>
    <scope>NUCLEOTIDE SEQUENCE [GENOMIC RNA]</scope>
</reference>
<organismHost>
    <name type="scientific">Aedes</name>
    <dbReference type="NCBI Taxonomy" id="7158"/>
</organismHost>
<organismHost>
    <name type="scientific">Homo sapiens</name>
    <name type="common">Human</name>
    <dbReference type="NCBI Taxonomy" id="9606"/>
</organismHost>
<organismHost>
    <name type="scientific">Passeriformes</name>
    <dbReference type="NCBI Taxonomy" id="9126"/>
</organismHost>
<dbReference type="EC" id="2.1.1.-" evidence="5"/>
<dbReference type="EC" id="2.7.7.-" evidence="5"/>
<dbReference type="EC" id="3.4.22.-" evidence="4"/>
<dbReference type="EC" id="3.6.1.15" evidence="7"/>
<dbReference type="EC" id="3.6.1.74" evidence="3"/>
<dbReference type="EC" id="3.6.4.13" evidence="7"/>
<dbReference type="EC" id="3.1.3.84" evidence="4"/>
<dbReference type="EC" id="2.7.7.19" evidence="2"/>
<dbReference type="EC" id="2.7.7.48" evidence="9"/>
<dbReference type="EMBL" id="DQ241303">
    <property type="protein sequence ID" value="ABB45865.1"/>
    <property type="molecule type" value="Genomic_RNA"/>
</dbReference>
<dbReference type="IntAct" id="Q306W8">
    <property type="interactions" value="2"/>
</dbReference>
<dbReference type="MEROPS" id="C09.002"/>
<dbReference type="Proteomes" id="UP000008275">
    <property type="component" value="Segment"/>
</dbReference>
<dbReference type="GO" id="GO:0044162">
    <property type="term" value="C:host cell cytoplasmic vesicle membrane"/>
    <property type="evidence" value="ECO:0007669"/>
    <property type="project" value="UniProtKB-SubCell"/>
</dbReference>
<dbReference type="GO" id="GO:0044176">
    <property type="term" value="C:host cell filopodium"/>
    <property type="evidence" value="ECO:0007669"/>
    <property type="project" value="UniProtKB-SubCell"/>
</dbReference>
<dbReference type="GO" id="GO:0042025">
    <property type="term" value="C:host cell nucleus"/>
    <property type="evidence" value="ECO:0007669"/>
    <property type="project" value="UniProtKB-SubCell"/>
</dbReference>
<dbReference type="GO" id="GO:0020002">
    <property type="term" value="C:host cell plasma membrane"/>
    <property type="evidence" value="ECO:0007669"/>
    <property type="project" value="UniProtKB-SubCell"/>
</dbReference>
<dbReference type="GO" id="GO:0016020">
    <property type="term" value="C:membrane"/>
    <property type="evidence" value="ECO:0007669"/>
    <property type="project" value="UniProtKB-KW"/>
</dbReference>
<dbReference type="GO" id="GO:0005524">
    <property type="term" value="F:ATP binding"/>
    <property type="evidence" value="ECO:0007669"/>
    <property type="project" value="UniProtKB-KW"/>
</dbReference>
<dbReference type="GO" id="GO:0016887">
    <property type="term" value="F:ATP hydrolysis activity"/>
    <property type="evidence" value="ECO:0007669"/>
    <property type="project" value="RHEA"/>
</dbReference>
<dbReference type="GO" id="GO:0008234">
    <property type="term" value="F:cysteine-type peptidase activity"/>
    <property type="evidence" value="ECO:0007669"/>
    <property type="project" value="UniProtKB-KW"/>
</dbReference>
<dbReference type="GO" id="GO:0005525">
    <property type="term" value="F:GTP binding"/>
    <property type="evidence" value="ECO:0007669"/>
    <property type="project" value="UniProtKB-KW"/>
</dbReference>
<dbReference type="GO" id="GO:0046872">
    <property type="term" value="F:metal ion binding"/>
    <property type="evidence" value="ECO:0007669"/>
    <property type="project" value="UniProtKB-KW"/>
</dbReference>
<dbReference type="GO" id="GO:0140818">
    <property type="term" value="F:mRNA 5'-triphosphate monophosphatase activity"/>
    <property type="evidence" value="ECO:0007669"/>
    <property type="project" value="RHEA"/>
</dbReference>
<dbReference type="GO" id="GO:0008174">
    <property type="term" value="F:mRNA methyltransferase activity"/>
    <property type="evidence" value="ECO:0007669"/>
    <property type="project" value="InterPro"/>
</dbReference>
<dbReference type="GO" id="GO:1990817">
    <property type="term" value="F:poly(A) RNA polymerase activity"/>
    <property type="evidence" value="ECO:0007669"/>
    <property type="project" value="UniProtKB-EC"/>
</dbReference>
<dbReference type="GO" id="GO:0004651">
    <property type="term" value="F:polynucleotide 5'-phosphatase activity"/>
    <property type="evidence" value="ECO:0007669"/>
    <property type="project" value="UniProtKB-EC"/>
</dbReference>
<dbReference type="GO" id="GO:0003723">
    <property type="term" value="F:RNA binding"/>
    <property type="evidence" value="ECO:0007669"/>
    <property type="project" value="UniProtKB-KW"/>
</dbReference>
<dbReference type="GO" id="GO:0003724">
    <property type="term" value="F:RNA helicase activity"/>
    <property type="evidence" value="ECO:0007669"/>
    <property type="project" value="UniProtKB-EC"/>
</dbReference>
<dbReference type="GO" id="GO:0003968">
    <property type="term" value="F:RNA-directed RNA polymerase activity"/>
    <property type="evidence" value="ECO:0007669"/>
    <property type="project" value="UniProtKB-KW"/>
</dbReference>
<dbReference type="GO" id="GO:0006370">
    <property type="term" value="P:7-methylguanosine mRNA capping"/>
    <property type="evidence" value="ECO:0007669"/>
    <property type="project" value="UniProtKB-KW"/>
</dbReference>
<dbReference type="GO" id="GO:0006351">
    <property type="term" value="P:DNA-templated transcription"/>
    <property type="evidence" value="ECO:0007669"/>
    <property type="project" value="InterPro"/>
</dbReference>
<dbReference type="GO" id="GO:0032259">
    <property type="term" value="P:methylation"/>
    <property type="evidence" value="ECO:0007669"/>
    <property type="project" value="UniProtKB-KW"/>
</dbReference>
<dbReference type="GO" id="GO:0016556">
    <property type="term" value="P:mRNA modification"/>
    <property type="evidence" value="ECO:0007669"/>
    <property type="project" value="InterPro"/>
</dbReference>
<dbReference type="GO" id="GO:0006508">
    <property type="term" value="P:proteolysis"/>
    <property type="evidence" value="ECO:0007669"/>
    <property type="project" value="UniProtKB-KW"/>
</dbReference>
<dbReference type="GO" id="GO:0039657">
    <property type="term" value="P:symbiont-mediated suppression of host gene expression"/>
    <property type="evidence" value="ECO:0007669"/>
    <property type="project" value="UniProtKB-KW"/>
</dbReference>
<dbReference type="GO" id="GO:0039523">
    <property type="term" value="P:symbiont-mediated suppression of host mRNA transcription via inhibition of RNA polymerase II activity"/>
    <property type="evidence" value="ECO:0007669"/>
    <property type="project" value="UniProtKB-KW"/>
</dbReference>
<dbReference type="GO" id="GO:0039694">
    <property type="term" value="P:viral RNA genome replication"/>
    <property type="evidence" value="ECO:0007669"/>
    <property type="project" value="InterPro"/>
</dbReference>
<dbReference type="CDD" id="cd21557">
    <property type="entry name" value="Macro_X_Nsp3-like"/>
    <property type="match status" value="1"/>
</dbReference>
<dbReference type="CDD" id="cd23250">
    <property type="entry name" value="Togaviridae_RdRp"/>
    <property type="match status" value="1"/>
</dbReference>
<dbReference type="FunFam" id="3.40.220.10:FF:000015">
    <property type="entry name" value="Polyprotein P1234"/>
    <property type="match status" value="1"/>
</dbReference>
<dbReference type="FunFam" id="3.40.50.300:FF:001415">
    <property type="entry name" value="Polyprotein P1234"/>
    <property type="match status" value="1"/>
</dbReference>
<dbReference type="Gene3D" id="3.90.70.110">
    <property type="entry name" value="Alphavirus nsP2 protease domain"/>
    <property type="match status" value="1"/>
</dbReference>
<dbReference type="Gene3D" id="3.40.220.10">
    <property type="entry name" value="Leucine Aminopeptidase, subunit E, domain 1"/>
    <property type="match status" value="1"/>
</dbReference>
<dbReference type="Gene3D" id="3.40.50.300">
    <property type="entry name" value="P-loop containing nucleotide triphosphate hydrolases"/>
    <property type="match status" value="2"/>
</dbReference>
<dbReference type="Gene3D" id="3.40.50.150">
    <property type="entry name" value="Vaccinia Virus protein VP39"/>
    <property type="match status" value="1"/>
</dbReference>
<dbReference type="InterPro" id="IPR027351">
    <property type="entry name" value="(+)RNA_virus_helicase_core_dom"/>
</dbReference>
<dbReference type="InterPro" id="IPR002588">
    <property type="entry name" value="Alphavirus-like_MT_dom"/>
</dbReference>
<dbReference type="InterPro" id="IPR002620">
    <property type="entry name" value="Alphavirus_nsp2pro"/>
</dbReference>
<dbReference type="InterPro" id="IPR044936">
    <property type="entry name" value="Alphavirus_nsp2pro_sf"/>
</dbReference>
<dbReference type="InterPro" id="IPR043502">
    <property type="entry name" value="DNA/RNA_pol_sf"/>
</dbReference>
<dbReference type="InterPro" id="IPR002589">
    <property type="entry name" value="Macro_dom"/>
</dbReference>
<dbReference type="InterPro" id="IPR043472">
    <property type="entry name" value="Macro_dom-like"/>
</dbReference>
<dbReference type="InterPro" id="IPR044371">
    <property type="entry name" value="Macro_X_NSP3-like"/>
</dbReference>
<dbReference type="InterPro" id="IPR048891">
    <property type="entry name" value="nsP3_ZBD"/>
</dbReference>
<dbReference type="InterPro" id="IPR027417">
    <property type="entry name" value="P-loop_NTPase"/>
</dbReference>
<dbReference type="InterPro" id="IPR001788">
    <property type="entry name" value="RNA-dep_RNA_pol_alsuvir"/>
</dbReference>
<dbReference type="InterPro" id="IPR007094">
    <property type="entry name" value="RNA-dir_pol_PSvirus"/>
</dbReference>
<dbReference type="InterPro" id="IPR029063">
    <property type="entry name" value="SAM-dependent_MTases_sf"/>
</dbReference>
<dbReference type="InterPro" id="IPR047311">
    <property type="entry name" value="Togaviridae_RdRp"/>
</dbReference>
<dbReference type="InterPro" id="IPR049329">
    <property type="entry name" value="ToMV_Hel_N"/>
</dbReference>
<dbReference type="Pfam" id="PF01661">
    <property type="entry name" value="Macro"/>
    <property type="match status" value="1"/>
</dbReference>
<dbReference type="Pfam" id="PF20852">
    <property type="entry name" value="nsP3_ZBD"/>
    <property type="match status" value="1"/>
</dbReference>
<dbReference type="Pfam" id="PF01707">
    <property type="entry name" value="Peptidase_C9"/>
    <property type="match status" value="1"/>
</dbReference>
<dbReference type="Pfam" id="PF00978">
    <property type="entry name" value="RdRP_2"/>
    <property type="match status" value="1"/>
</dbReference>
<dbReference type="Pfam" id="PF20896">
    <property type="entry name" value="ToMV_Hel_N"/>
    <property type="match status" value="1"/>
</dbReference>
<dbReference type="Pfam" id="PF01443">
    <property type="entry name" value="Viral_helicase1"/>
    <property type="match status" value="1"/>
</dbReference>
<dbReference type="Pfam" id="PF01660">
    <property type="entry name" value="Vmethyltransf"/>
    <property type="match status" value="1"/>
</dbReference>
<dbReference type="SMART" id="SM00506">
    <property type="entry name" value="A1pp"/>
    <property type="match status" value="1"/>
</dbReference>
<dbReference type="SUPFAM" id="SSF56672">
    <property type="entry name" value="DNA/RNA polymerases"/>
    <property type="match status" value="1"/>
</dbReference>
<dbReference type="SUPFAM" id="SSF52949">
    <property type="entry name" value="Macro domain-like"/>
    <property type="match status" value="1"/>
</dbReference>
<dbReference type="SUPFAM" id="SSF52540">
    <property type="entry name" value="P-loop containing nucleoside triphosphate hydrolases"/>
    <property type="match status" value="1"/>
</dbReference>
<dbReference type="PROSITE" id="PS51743">
    <property type="entry name" value="ALPHAVIRUS_MT"/>
    <property type="match status" value="1"/>
</dbReference>
<dbReference type="PROSITE" id="PS51154">
    <property type="entry name" value="MACRO"/>
    <property type="match status" value="1"/>
</dbReference>
<dbReference type="PROSITE" id="PS51520">
    <property type="entry name" value="NSP2PRO"/>
    <property type="match status" value="1"/>
</dbReference>
<dbReference type="PROSITE" id="PS51657">
    <property type="entry name" value="PSRV_HELICASE"/>
    <property type="match status" value="1"/>
</dbReference>
<dbReference type="PROSITE" id="PS50507">
    <property type="entry name" value="RDRP_SSRNA_POS"/>
    <property type="match status" value="1"/>
</dbReference>
<sequence length="2474" mass="276424">MEKVHVDLDADSPYVKLLQKCFPHFEIEATQVTDNDHANARAFSHLATKLIESEVDPDQVILDIGSAPVRHTHSKHKYHCICPMISAEDPDRLQRYADKLRKSDVTDRFIASKAADLLTVMSTPDVETPSLCMHTDSTCRYHGTVAVYQDVYAVHAPTSIYHQALKGVRTIYWIGFDTTPFMYKNMAGAYPTYNTNWADESVLEARNIGLCSSDLHEKRLGKISIMRKKKLQPTNKVVFSVGSTIYTEERILLRSWHLPNVFHLKGKTSFTGRCNTIVSCDGYVVKKITISPGIYGKVDNLASTLHREGFLSCKVTDTLRGERVSFPVCTYVPATLCDQMTGILATDVSVDDAQKLLVGLNQRIVVNGRTQRNTNTMQNYLLPVVAQAFSRWAREYRADLEDEKDLGVRERSLVMGCCWAFKTHKITSIYKKPGTQTIKKVPAVFNSFVIPQFNSYGLNIGLRRRIKMLLEEKRKPAPIITEADVAHLKGMQEEAEAVAEAEAVRAALPPLLPEVERETIEADIDLIMQEAGAGSVETPRRHIKVTTYPGEETIGSYAVLSPQAVLNSEKLACIHPLAEQVLVMTHKGRAGRYKVEPYHGRVVVPSGTAIPIPDFQALSESATIVYNEREFVNRYLHHIAINGGAINTDEEYYKVLRSSEADSEYVFDIDARKCVKKADAGPMCLVGELVDPPFHEFAYESLKTRPAAPHKVPTIGVYGVPGSGKSGIIKSAVTKRDLVVSAKKENCTEIIKDVKRMRGMDIAARTVDSVLLNGVKHPVDTLYIDEAFACHAGTLLALIAIVKPKKVVLCGDPKQCGFFNMMCLKVHFNHEICTEVYHKSISRRCTKTVTAIVSTLFYDKRMRTVNPCSDKIIIDTTSTTKPQRDDIILTCFRGWVKQLQIDYKNHEIMTAAASQGLTRKGVYAVRYKVNENPLYAQTSEHVNVLLTRTEKRIVWKTLAGDPWIKTLTAHYPGEFSATLEEWQAEHDAIMERILETPASSDVYQNKVHVCWAKALEPVLATANITLTRSQWETIPAFKDDKAFSPEMALNFLCTRFFGVDIDSGLFSAPTVPLTYTNEHWDNSPGPNRYGLCMRTAKELARRYPCILKAVDTGRLADVRTNTIKDYSPLINVVPLNRRLPHSLVVSHRYTGDGNYSQLLSKLIGKTVLVIGTPISVPGKRVETLGPGPQCTYKADLDLGIPSTIGKYDIIFVNVRTPYKHHHYQQCEDHAIHHSMLTRKAVDHLNKGGTCVALGYGTADRATENIISAVARSFRFSRVCQPKCAWENTEVAFVFFGKDNGNHLRDQDQLSIVLNNIYQGSTQYEAGRAPAYRVIRGDISKSTDEAIVNAANNKGQPGAGVCGALYKKWPGAFDKVPIATGTAHLVKHTPNIIHAVGPNFSRVSEVEGNQKLSEVYMDIAKIINRERYNKVSIPLLSTGIYAGGKDRVMQSLNHLFTAMDTTDADVTIYCLDKQWEARIKDAIARKESVEELVEDDKPVDIELVRVHPLSSLVGRPGYSTDEGKVHSYLEGTRFHQTAKDIAEIYAMWPNKQEANEQICLYVLGESMTSIRSKCPVEDSEASSPPHTIPCLCNYAMTAERVYRLRMAKNEQFAVCSSFQLPKYRITGVQKIQCNKPVIFSGVVPPAIHPRKFSAIEETVPVTIERLVPRRPAPPVPVPARIPSPRCSPAVSMQSLGGSSTSDVVISEAEVHDSDSDCSIPPMPFVVEAEVHASQGSHWSIPSASGFEIRELPEDRSISGSPTRTSVISDHSVNLITFDSVTDIFENFKQAPFQFLSEIRPIPAPRRRVGGFETDTKRYDKTEEKPIPKPRTRTTKYKQPPGVARSISEAELDEFIRRHSNXRYEAGAYIFSSETGQGHLQQKSTRQCKLQNPILERSVHEKFYAPRLDLEREKLLQKKLQLCASEGNRSRYQSRKVENMKAITAERLLQGIGAYLSAESQPVECYKVNYPVPIYSTTRSNRFSSADVAVRVCNLVLQENFPTVASYTITDEYDAYLDMVDGASCCLDTATFCPAKLRSFPKKHSYLRPEIRSAVPSPIQNTLQNVLAAATKRNCNVTQMRELPVLDSAAFNVECFKKYACNDEYWDTFKNNPIRLTTENVTQYVTKLKGPKAAALFAKTHNLQPLHEIPMDRFVMDLKRDVKVTPGTKHTEERPKVQVIQAAEPLATAYLCGIHRELVRRLNAVLLPNIHTLFDMSAEDFDAIIAEHFQFGDAVLETDIASFDKSEDDAIAMSALMILEDLGVDQALLDLIEAAFGNITSVHLPTGTRFKFGAMMKSGMFLTLFINTVVNIMIASRVLRERLTNSPCAAFIGDDNIVKGVKSDALMAERCATWLNMEVKIIDATVGVKAPYFCGGFIVVDQVTGTACRVADPLKRLFKLGKPLPLDDDQDGDRRRALYDEALRWNRIGITDELIKAVESRYEVFYISLVITALTTLAATVSNFKYIRGNPITLYG</sequence>